<sequence>MGKLTLLLLILLGWLQYSLWLGKNGVHDFVRVKDDVALQEVNNGKLKARNDQLFAEIDDLNGGQEAIEERARNELGMIKPGESFYRLVPDQSRRNASIPSTQNNAQQ</sequence>
<organism>
    <name type="scientific">Yersinia enterocolitica serotype O:8 / biotype 1B (strain NCTC 13174 / 8081)</name>
    <dbReference type="NCBI Taxonomy" id="393305"/>
    <lineage>
        <taxon>Bacteria</taxon>
        <taxon>Pseudomonadati</taxon>
        <taxon>Pseudomonadota</taxon>
        <taxon>Gammaproteobacteria</taxon>
        <taxon>Enterobacterales</taxon>
        <taxon>Yersiniaceae</taxon>
        <taxon>Yersinia</taxon>
    </lineage>
</organism>
<evidence type="ECO:0000255" key="1">
    <source>
        <dbReference type="HAMAP-Rule" id="MF_00599"/>
    </source>
</evidence>
<feature type="chain" id="PRO_1000025739" description="Cell division protein FtsB">
    <location>
        <begin position="1"/>
        <end position="107"/>
    </location>
</feature>
<feature type="topological domain" description="Cytoplasmic" evidence="1">
    <location>
        <begin position="1"/>
        <end position="3"/>
    </location>
</feature>
<feature type="transmembrane region" description="Helical" evidence="1">
    <location>
        <begin position="4"/>
        <end position="21"/>
    </location>
</feature>
<feature type="topological domain" description="Periplasmic" evidence="1">
    <location>
        <begin position="22"/>
        <end position="107"/>
    </location>
</feature>
<feature type="coiled-coil region" evidence="1">
    <location>
        <begin position="39"/>
        <end position="62"/>
    </location>
</feature>
<protein>
    <recommendedName>
        <fullName evidence="1">Cell division protein FtsB</fullName>
    </recommendedName>
</protein>
<accession>A1JJT3</accession>
<gene>
    <name evidence="1" type="primary">ftsB</name>
    <name type="ordered locus">YE0768</name>
</gene>
<proteinExistence type="inferred from homology"/>
<comment type="function">
    <text evidence="1">Essential cell division protein. May link together the upstream cell division proteins, which are predominantly cytoplasmic, with the downstream cell division proteins, which are predominantly periplasmic.</text>
</comment>
<comment type="subunit">
    <text evidence="1">Part of a complex composed of FtsB, FtsL and FtsQ.</text>
</comment>
<comment type="subcellular location">
    <subcellularLocation>
        <location evidence="1">Cell inner membrane</location>
        <topology evidence="1">Single-pass type II membrane protein</topology>
    </subcellularLocation>
    <text evidence="1">Localizes to the division septum.</text>
</comment>
<comment type="similarity">
    <text evidence="1">Belongs to the FtsB family.</text>
</comment>
<keyword id="KW-0131">Cell cycle</keyword>
<keyword id="KW-0132">Cell division</keyword>
<keyword id="KW-0997">Cell inner membrane</keyword>
<keyword id="KW-1003">Cell membrane</keyword>
<keyword id="KW-0175">Coiled coil</keyword>
<keyword id="KW-0472">Membrane</keyword>
<keyword id="KW-0812">Transmembrane</keyword>
<keyword id="KW-1133">Transmembrane helix</keyword>
<reference key="1">
    <citation type="journal article" date="2006" name="PLoS Genet.">
        <title>The complete genome sequence and comparative genome analysis of the high pathogenicity Yersinia enterocolitica strain 8081.</title>
        <authorList>
            <person name="Thomson N.R."/>
            <person name="Howard S."/>
            <person name="Wren B.W."/>
            <person name="Holden M.T.G."/>
            <person name="Crossman L."/>
            <person name="Challis G.L."/>
            <person name="Churcher C."/>
            <person name="Mungall K."/>
            <person name="Brooks K."/>
            <person name="Chillingworth T."/>
            <person name="Feltwell T."/>
            <person name="Abdellah Z."/>
            <person name="Hauser H."/>
            <person name="Jagels K."/>
            <person name="Maddison M."/>
            <person name="Moule S."/>
            <person name="Sanders M."/>
            <person name="Whitehead S."/>
            <person name="Quail M.A."/>
            <person name="Dougan G."/>
            <person name="Parkhill J."/>
            <person name="Prentice M.B."/>
        </authorList>
    </citation>
    <scope>NUCLEOTIDE SEQUENCE [LARGE SCALE GENOMIC DNA]</scope>
    <source>
        <strain>NCTC 13174 / 8081</strain>
    </source>
</reference>
<dbReference type="EMBL" id="AM286415">
    <property type="protein sequence ID" value="CAL10870.1"/>
    <property type="molecule type" value="Genomic_DNA"/>
</dbReference>
<dbReference type="RefSeq" id="WP_005167289.1">
    <property type="nucleotide sequence ID" value="NC_008800.1"/>
</dbReference>
<dbReference type="RefSeq" id="YP_001005109.1">
    <property type="nucleotide sequence ID" value="NC_008800.1"/>
</dbReference>
<dbReference type="SMR" id="A1JJT3"/>
<dbReference type="KEGG" id="yen:YE0768"/>
<dbReference type="PATRIC" id="fig|393305.7.peg.861"/>
<dbReference type="eggNOG" id="COG2919">
    <property type="taxonomic scope" value="Bacteria"/>
</dbReference>
<dbReference type="HOGENOM" id="CLU_134863_5_2_6"/>
<dbReference type="OrthoDB" id="7061211at2"/>
<dbReference type="Proteomes" id="UP000000642">
    <property type="component" value="Chromosome"/>
</dbReference>
<dbReference type="GO" id="GO:0032153">
    <property type="term" value="C:cell division site"/>
    <property type="evidence" value="ECO:0007669"/>
    <property type="project" value="UniProtKB-UniRule"/>
</dbReference>
<dbReference type="GO" id="GO:0030428">
    <property type="term" value="C:cell septum"/>
    <property type="evidence" value="ECO:0007669"/>
    <property type="project" value="TreeGrafter"/>
</dbReference>
<dbReference type="GO" id="GO:0005886">
    <property type="term" value="C:plasma membrane"/>
    <property type="evidence" value="ECO:0007669"/>
    <property type="project" value="UniProtKB-SubCell"/>
</dbReference>
<dbReference type="GO" id="GO:0043093">
    <property type="term" value="P:FtsZ-dependent cytokinesis"/>
    <property type="evidence" value="ECO:0007669"/>
    <property type="project" value="UniProtKB-UniRule"/>
</dbReference>
<dbReference type="Gene3D" id="1.20.5.400">
    <property type="match status" value="1"/>
</dbReference>
<dbReference type="HAMAP" id="MF_00599">
    <property type="entry name" value="FtsB"/>
    <property type="match status" value="1"/>
</dbReference>
<dbReference type="InterPro" id="IPR023081">
    <property type="entry name" value="Cell_div_FtsB"/>
</dbReference>
<dbReference type="InterPro" id="IPR007060">
    <property type="entry name" value="FtsL/DivIC"/>
</dbReference>
<dbReference type="NCBIfam" id="NF002058">
    <property type="entry name" value="PRK00888.1"/>
    <property type="match status" value="1"/>
</dbReference>
<dbReference type="PANTHER" id="PTHR37485">
    <property type="entry name" value="CELL DIVISION PROTEIN FTSB"/>
    <property type="match status" value="1"/>
</dbReference>
<dbReference type="PANTHER" id="PTHR37485:SF1">
    <property type="entry name" value="CELL DIVISION PROTEIN FTSB"/>
    <property type="match status" value="1"/>
</dbReference>
<dbReference type="Pfam" id="PF04977">
    <property type="entry name" value="DivIC"/>
    <property type="match status" value="1"/>
</dbReference>
<name>FTSB_YERE8</name>